<protein>
    <recommendedName>
        <fullName evidence="1">Type III pantothenate kinase</fullName>
        <ecNumber evidence="1">2.7.1.33</ecNumber>
    </recommendedName>
    <alternativeName>
        <fullName evidence="1">PanK-III</fullName>
    </alternativeName>
    <alternativeName>
        <fullName evidence="1">Pantothenic acid kinase</fullName>
    </alternativeName>
</protein>
<comment type="function">
    <text evidence="1">Catalyzes the phosphorylation of pantothenate (Pan), the first step in CoA biosynthesis.</text>
</comment>
<comment type="catalytic activity">
    <reaction evidence="1">
        <text>(R)-pantothenate + ATP = (R)-4'-phosphopantothenate + ADP + H(+)</text>
        <dbReference type="Rhea" id="RHEA:16373"/>
        <dbReference type="ChEBI" id="CHEBI:10986"/>
        <dbReference type="ChEBI" id="CHEBI:15378"/>
        <dbReference type="ChEBI" id="CHEBI:29032"/>
        <dbReference type="ChEBI" id="CHEBI:30616"/>
        <dbReference type="ChEBI" id="CHEBI:456216"/>
        <dbReference type="EC" id="2.7.1.33"/>
    </reaction>
</comment>
<comment type="cofactor">
    <cofactor evidence="1">
        <name>NH4(+)</name>
        <dbReference type="ChEBI" id="CHEBI:28938"/>
    </cofactor>
    <cofactor evidence="1">
        <name>K(+)</name>
        <dbReference type="ChEBI" id="CHEBI:29103"/>
    </cofactor>
    <text evidence="1">A monovalent cation. Ammonium or potassium.</text>
</comment>
<comment type="pathway">
    <text evidence="1">Cofactor biosynthesis; coenzyme A biosynthesis; CoA from (R)-pantothenate: step 1/5.</text>
</comment>
<comment type="subunit">
    <text evidence="1">Homodimer.</text>
</comment>
<comment type="subcellular location">
    <subcellularLocation>
        <location evidence="1">Cytoplasm</location>
    </subcellularLocation>
</comment>
<comment type="similarity">
    <text evidence="1">Belongs to the type III pantothenate kinase family.</text>
</comment>
<feature type="chain" id="PRO_1000140266" description="Type III pantothenate kinase">
    <location>
        <begin position="1"/>
        <end position="242"/>
    </location>
</feature>
<feature type="active site" description="Proton acceptor" evidence="1">
    <location>
        <position position="100"/>
    </location>
</feature>
<feature type="binding site" evidence="1">
    <location>
        <begin position="7"/>
        <end position="14"/>
    </location>
    <ligand>
        <name>ATP</name>
        <dbReference type="ChEBI" id="CHEBI:30616"/>
    </ligand>
</feature>
<feature type="binding site" evidence="1">
    <location>
        <position position="91"/>
    </location>
    <ligand>
        <name>substrate</name>
    </ligand>
</feature>
<feature type="binding site" evidence="1">
    <location>
        <begin position="98"/>
        <end position="101"/>
    </location>
    <ligand>
        <name>substrate</name>
    </ligand>
</feature>
<feature type="binding site" evidence="1">
    <location>
        <position position="121"/>
    </location>
    <ligand>
        <name>ATP</name>
        <dbReference type="ChEBI" id="CHEBI:30616"/>
    </ligand>
</feature>
<feature type="binding site" evidence="1">
    <location>
        <position position="171"/>
    </location>
    <ligand>
        <name>substrate</name>
    </ligand>
</feature>
<organism>
    <name type="scientific">Xanthomonas oryzae pv. oryzae (strain PXO99A)</name>
    <dbReference type="NCBI Taxonomy" id="360094"/>
    <lineage>
        <taxon>Bacteria</taxon>
        <taxon>Pseudomonadati</taxon>
        <taxon>Pseudomonadota</taxon>
        <taxon>Gammaproteobacteria</taxon>
        <taxon>Lysobacterales</taxon>
        <taxon>Lysobacteraceae</taxon>
        <taxon>Xanthomonas</taxon>
    </lineage>
</organism>
<evidence type="ECO:0000255" key="1">
    <source>
        <dbReference type="HAMAP-Rule" id="MF_01274"/>
    </source>
</evidence>
<dbReference type="EC" id="2.7.1.33" evidence="1"/>
<dbReference type="EMBL" id="CP000967">
    <property type="protein sequence ID" value="ACD61373.1"/>
    <property type="molecule type" value="Genomic_DNA"/>
</dbReference>
<dbReference type="RefSeq" id="WP_011257361.1">
    <property type="nucleotide sequence ID" value="NC_010717.2"/>
</dbReference>
<dbReference type="SMR" id="B2SS98"/>
<dbReference type="KEGG" id="xop:PXO_02843"/>
<dbReference type="eggNOG" id="COG1521">
    <property type="taxonomic scope" value="Bacteria"/>
</dbReference>
<dbReference type="HOGENOM" id="CLU_066627_0_0_6"/>
<dbReference type="UniPathway" id="UPA00241">
    <property type="reaction ID" value="UER00352"/>
</dbReference>
<dbReference type="Proteomes" id="UP000001740">
    <property type="component" value="Chromosome"/>
</dbReference>
<dbReference type="GO" id="GO:0005737">
    <property type="term" value="C:cytoplasm"/>
    <property type="evidence" value="ECO:0007669"/>
    <property type="project" value="UniProtKB-SubCell"/>
</dbReference>
<dbReference type="GO" id="GO:0005524">
    <property type="term" value="F:ATP binding"/>
    <property type="evidence" value="ECO:0007669"/>
    <property type="project" value="UniProtKB-UniRule"/>
</dbReference>
<dbReference type="GO" id="GO:0004594">
    <property type="term" value="F:pantothenate kinase activity"/>
    <property type="evidence" value="ECO:0007669"/>
    <property type="project" value="UniProtKB-UniRule"/>
</dbReference>
<dbReference type="GO" id="GO:0015937">
    <property type="term" value="P:coenzyme A biosynthetic process"/>
    <property type="evidence" value="ECO:0007669"/>
    <property type="project" value="UniProtKB-UniRule"/>
</dbReference>
<dbReference type="CDD" id="cd24015">
    <property type="entry name" value="ASKHA_NBD_PanK-III"/>
    <property type="match status" value="1"/>
</dbReference>
<dbReference type="Gene3D" id="3.30.420.40">
    <property type="match status" value="2"/>
</dbReference>
<dbReference type="HAMAP" id="MF_01274">
    <property type="entry name" value="Pantothen_kinase_3"/>
    <property type="match status" value="1"/>
</dbReference>
<dbReference type="InterPro" id="IPR043129">
    <property type="entry name" value="ATPase_NBD"/>
</dbReference>
<dbReference type="InterPro" id="IPR004619">
    <property type="entry name" value="Type_III_PanK"/>
</dbReference>
<dbReference type="NCBIfam" id="TIGR00671">
    <property type="entry name" value="baf"/>
    <property type="match status" value="1"/>
</dbReference>
<dbReference type="NCBIfam" id="NF009864">
    <property type="entry name" value="PRK13327.1"/>
    <property type="match status" value="1"/>
</dbReference>
<dbReference type="PANTHER" id="PTHR34265">
    <property type="entry name" value="TYPE III PANTOTHENATE KINASE"/>
    <property type="match status" value="1"/>
</dbReference>
<dbReference type="PANTHER" id="PTHR34265:SF1">
    <property type="entry name" value="TYPE III PANTOTHENATE KINASE"/>
    <property type="match status" value="1"/>
</dbReference>
<dbReference type="Pfam" id="PF03309">
    <property type="entry name" value="Pan_kinase"/>
    <property type="match status" value="1"/>
</dbReference>
<dbReference type="SUPFAM" id="SSF53067">
    <property type="entry name" value="Actin-like ATPase domain"/>
    <property type="match status" value="2"/>
</dbReference>
<name>COAX_XANOP</name>
<gene>
    <name evidence="1" type="primary">coaX</name>
    <name type="ordered locus">PXO_02843</name>
</gene>
<reference key="1">
    <citation type="journal article" date="2008" name="BMC Genomics">
        <title>Genome sequence and rapid evolution of the rice pathogen Xanthomonas oryzae pv. oryzae PXO99A.</title>
        <authorList>
            <person name="Salzberg S.L."/>
            <person name="Sommer D.D."/>
            <person name="Schatz M.C."/>
            <person name="Phillippy A.M."/>
            <person name="Rabinowicz P.D."/>
            <person name="Tsuge S."/>
            <person name="Furutani A."/>
            <person name="Ochiai H."/>
            <person name="Delcher A.L."/>
            <person name="Kelley D."/>
            <person name="Madupu R."/>
            <person name="Puiu D."/>
            <person name="Radune D."/>
            <person name="Shumway M."/>
            <person name="Trapnell C."/>
            <person name="Aparna G."/>
            <person name="Jha G."/>
            <person name="Pandey A."/>
            <person name="Patil P.B."/>
            <person name="Ishihara H."/>
            <person name="Meyer D.F."/>
            <person name="Szurek B."/>
            <person name="Verdier V."/>
            <person name="Koebnik R."/>
            <person name="Dow J.M."/>
            <person name="Ryan R.P."/>
            <person name="Hirata H."/>
            <person name="Tsuyumu S."/>
            <person name="Won Lee S."/>
            <person name="Seo Y.-S."/>
            <person name="Sriariyanum M."/>
            <person name="Ronald P.C."/>
            <person name="Sonti R.V."/>
            <person name="Van Sluys M.-A."/>
            <person name="Leach J.E."/>
            <person name="White F.F."/>
            <person name="Bogdanove A.J."/>
        </authorList>
    </citation>
    <scope>NUCLEOTIDE SEQUENCE [LARGE SCALE GENOMIC DNA]</scope>
    <source>
        <strain>PXO99A</strain>
    </source>
</reference>
<keyword id="KW-0067">ATP-binding</keyword>
<keyword id="KW-0173">Coenzyme A biosynthesis</keyword>
<keyword id="KW-0963">Cytoplasm</keyword>
<keyword id="KW-0418">Kinase</keyword>
<keyword id="KW-0547">Nucleotide-binding</keyword>
<keyword id="KW-0630">Potassium</keyword>
<keyword id="KW-0808">Transferase</keyword>
<accession>B2SS98</accession>
<proteinExistence type="inferred from homology"/>
<sequence length="242" mass="24805">MSEWLFDLGNSRFKYAPLHGNRAGQVQAWAHGAEAMDAAALAALPSGQIAHVASVAAPALTQRMIACLQERFTQVRIVRTAAECAGIRIAYADPSRFGVDRFLALLGARGDAPVLVAGVGTALTIDVLGADGLHHGGCIAASPTTMREALHARAVQLPASGGDYVELAIDTDDALTSGCDGAAVALIERSLQHAQRSLGAPVRLLVHGGGAPPLLPLLPGATFRAALVLDGLATWATAAASP</sequence>